<sequence>MEEIQRYLQPDRSQQHNFLYPLIFQEYIYALAHDHGLNRNRSILLENPSYNNKFSLLIVKRLITRMYQQNHFLISTNDSNKNSFLGCNKSLYSQMISEGFAFIVEIPFSLRLISSLSSFEGKKIFKSHNLRSIHSTFPFLEDNFSHLNYVLDILIPYPVHLEILVQTLRYWVKDASSLHLLRFFLHEYWNLNSLITSKKPGYSFSKKNQRFFFFLYNSYVYECESTFVFLRNQSSHLRSTSFGALLERIYFYGKIERLVEVFAKDFQVTLWLFKDPFMHYVRYQGKSILASKGTFLLMNKWKFYLVNFWQCHFYLCFPTGRIHINQLSNHSRDFMGYLSSVRLNPSMLRSQMLENSFLINNAIKKFDTLVPIIPLIGSLAKANFCTVLGHPISKPVWSDLSDSDIIDRFGRICRNLFHYYSGSSKKKTLYRIKYILRLSCARTLARKHKSTVRTFLKRSGSELLEEFLTSEEQVLSLTFPRASSSLWGVYRSRIWYLDIFCIHDLANYQ</sequence>
<keyword id="KW-0150">Chloroplast</keyword>
<keyword id="KW-0507">mRNA processing</keyword>
<keyword id="KW-0934">Plastid</keyword>
<keyword id="KW-0694">RNA-binding</keyword>
<keyword id="KW-0819">tRNA processing</keyword>
<gene>
    <name evidence="1" type="primary">matK</name>
</gene>
<proteinExistence type="inferred from homology"/>
<comment type="function">
    <text evidence="1">Usually encoded in the trnK tRNA gene intron. Probably assists in splicing its own and other chloroplast group II introns.</text>
</comment>
<comment type="subcellular location">
    <subcellularLocation>
        <location>Plastid</location>
        <location>Chloroplast</location>
    </subcellularLocation>
</comment>
<comment type="similarity">
    <text evidence="1">Belongs to the intron maturase 2 family. MatK subfamily.</text>
</comment>
<accession>Q95DQ5</accession>
<protein>
    <recommendedName>
        <fullName evidence="1">Maturase K</fullName>
    </recommendedName>
    <alternativeName>
        <fullName evidence="1">Intron maturase</fullName>
    </alternativeName>
</protein>
<feature type="chain" id="PRO_0000143542" description="Maturase K">
    <location>
        <begin position="1"/>
        <end position="509"/>
    </location>
</feature>
<name>MATK_NICGU</name>
<evidence type="ECO:0000255" key="1">
    <source>
        <dbReference type="HAMAP-Rule" id="MF_01390"/>
    </source>
</evidence>
<geneLocation type="chloroplast"/>
<reference key="1">
    <citation type="journal article" date="2000" name="Plant Biol.">
        <title>Molecular phylogeny of Nicotiana (Solanaceae) based on the nucleotide sequence of the matK gene.</title>
        <authorList>
            <person name="Aoki S."/>
            <person name="Ito M."/>
        </authorList>
    </citation>
    <scope>NUCLEOTIDE SEQUENCE [GENOMIC DNA]</scope>
</reference>
<dbReference type="EMBL" id="AB039995">
    <property type="protein sequence ID" value="BAB64846.1"/>
    <property type="molecule type" value="Genomic_DNA"/>
</dbReference>
<dbReference type="GO" id="GO:0009507">
    <property type="term" value="C:chloroplast"/>
    <property type="evidence" value="ECO:0007669"/>
    <property type="project" value="UniProtKB-SubCell"/>
</dbReference>
<dbReference type="GO" id="GO:0003723">
    <property type="term" value="F:RNA binding"/>
    <property type="evidence" value="ECO:0007669"/>
    <property type="project" value="UniProtKB-KW"/>
</dbReference>
<dbReference type="GO" id="GO:0006397">
    <property type="term" value="P:mRNA processing"/>
    <property type="evidence" value="ECO:0007669"/>
    <property type="project" value="UniProtKB-KW"/>
</dbReference>
<dbReference type="GO" id="GO:0008380">
    <property type="term" value="P:RNA splicing"/>
    <property type="evidence" value="ECO:0007669"/>
    <property type="project" value="UniProtKB-UniRule"/>
</dbReference>
<dbReference type="GO" id="GO:0008033">
    <property type="term" value="P:tRNA processing"/>
    <property type="evidence" value="ECO:0007669"/>
    <property type="project" value="UniProtKB-KW"/>
</dbReference>
<dbReference type="HAMAP" id="MF_01390">
    <property type="entry name" value="MatK"/>
    <property type="match status" value="1"/>
</dbReference>
<dbReference type="InterPro" id="IPR024937">
    <property type="entry name" value="Domain_X"/>
</dbReference>
<dbReference type="InterPro" id="IPR002866">
    <property type="entry name" value="Maturase_MatK"/>
</dbReference>
<dbReference type="InterPro" id="IPR024942">
    <property type="entry name" value="Maturase_MatK_N"/>
</dbReference>
<dbReference type="PANTHER" id="PTHR34811">
    <property type="entry name" value="MATURASE K"/>
    <property type="match status" value="1"/>
</dbReference>
<dbReference type="PANTHER" id="PTHR34811:SF1">
    <property type="entry name" value="MATURASE K"/>
    <property type="match status" value="1"/>
</dbReference>
<dbReference type="Pfam" id="PF01348">
    <property type="entry name" value="Intron_maturas2"/>
    <property type="match status" value="1"/>
</dbReference>
<dbReference type="Pfam" id="PF01824">
    <property type="entry name" value="MatK_N"/>
    <property type="match status" value="1"/>
</dbReference>
<organism>
    <name type="scientific">Nicotiana glutinosa</name>
    <name type="common">Tobacco</name>
    <dbReference type="NCBI Taxonomy" id="35889"/>
    <lineage>
        <taxon>Eukaryota</taxon>
        <taxon>Viridiplantae</taxon>
        <taxon>Streptophyta</taxon>
        <taxon>Embryophyta</taxon>
        <taxon>Tracheophyta</taxon>
        <taxon>Spermatophyta</taxon>
        <taxon>Magnoliopsida</taxon>
        <taxon>eudicotyledons</taxon>
        <taxon>Gunneridae</taxon>
        <taxon>Pentapetalae</taxon>
        <taxon>asterids</taxon>
        <taxon>lamiids</taxon>
        <taxon>Solanales</taxon>
        <taxon>Solanaceae</taxon>
        <taxon>Nicotianoideae</taxon>
        <taxon>Nicotianeae</taxon>
        <taxon>Nicotiana</taxon>
    </lineage>
</organism>